<feature type="signal peptide" evidence="1">
    <location>
        <begin position="1"/>
        <end position="32"/>
    </location>
</feature>
<feature type="propeptide" id="PRO_0000027102" evidence="1">
    <location>
        <begin position="33"/>
        <end position="114"/>
    </location>
</feature>
<feature type="chain" id="PRO_0000027103" description="Proprotein convertase subtilisin/kexin type 5">
    <location>
        <begin position="115"/>
        <end position="1860"/>
    </location>
</feature>
<feature type="topological domain" description="Extracellular" evidence="2">
    <location>
        <begin position="115"/>
        <end position="1743"/>
    </location>
</feature>
<feature type="transmembrane region" description="Helical" evidence="2">
    <location>
        <begin position="1744"/>
        <end position="1764"/>
    </location>
</feature>
<feature type="topological domain" description="Cytoplasmic" evidence="2">
    <location>
        <begin position="1765"/>
        <end position="1860"/>
    </location>
</feature>
<feature type="domain" description="Peptidase S8" evidence="4">
    <location>
        <begin position="134"/>
        <end position="453"/>
    </location>
</feature>
<feature type="domain" description="P/Homo B" evidence="3">
    <location>
        <begin position="461"/>
        <end position="601"/>
    </location>
</feature>
<feature type="repeat" description="FU 1">
    <location>
        <begin position="630"/>
        <end position="680"/>
    </location>
</feature>
<feature type="repeat" description="FU 2">
    <location>
        <begin position="683"/>
        <end position="730"/>
    </location>
</feature>
<feature type="repeat" description="FU 3">
    <location>
        <begin position="734"/>
        <end position="777"/>
    </location>
</feature>
<feature type="repeat" description="FU 4">
    <location>
        <begin position="779"/>
        <end position="824"/>
    </location>
</feature>
<feature type="repeat" description="FU 5">
    <location>
        <begin position="832"/>
        <end position="879"/>
    </location>
</feature>
<feature type="domain" description="PLAC">
    <location>
        <begin position="869"/>
        <end position="913"/>
    </location>
</feature>
<feature type="repeat" description="FU 6">
    <location>
        <begin position="882"/>
        <end position="927"/>
    </location>
</feature>
<feature type="repeat" description="FU 7">
    <location>
        <begin position="929"/>
        <end position="979"/>
    </location>
</feature>
<feature type="repeat" description="FU 8">
    <location>
        <begin position="982"/>
        <end position="1028"/>
    </location>
</feature>
<feature type="repeat" description="FU 9">
    <location>
        <begin position="1032"/>
        <end position="1077"/>
    </location>
</feature>
<feature type="repeat" description="FU 10">
    <location>
        <begin position="1079"/>
        <end position="1121"/>
    </location>
</feature>
<feature type="repeat" description="FU 11">
    <location>
        <begin position="1125"/>
        <end position="1168"/>
    </location>
</feature>
<feature type="repeat" description="FU 12">
    <location>
        <begin position="1177"/>
        <end position="1221"/>
    </location>
</feature>
<feature type="repeat" description="FU 13">
    <location>
        <begin position="1225"/>
        <end position="1272"/>
    </location>
</feature>
<feature type="repeat" description="FU 14">
    <location>
        <begin position="1274"/>
        <end position="1318"/>
    </location>
</feature>
<feature type="repeat" description="FU 15">
    <location>
        <begin position="1320"/>
        <end position="1363"/>
    </location>
</feature>
<feature type="repeat" description="FU 16">
    <location>
        <begin position="1365"/>
        <end position="1411"/>
    </location>
</feature>
<feature type="repeat" description="FU 17">
    <location>
        <begin position="1415"/>
        <end position="1461"/>
    </location>
</feature>
<feature type="repeat" description="FU 18">
    <location>
        <begin position="1465"/>
        <end position="1510"/>
    </location>
</feature>
<feature type="repeat" description="FU 19">
    <location>
        <begin position="1514"/>
        <end position="1559"/>
    </location>
</feature>
<feature type="repeat" description="FU 20">
    <location>
        <begin position="1563"/>
        <end position="1610"/>
    </location>
</feature>
<feature type="repeat" description="FU 21">
    <location>
        <begin position="1614"/>
        <end position="1659"/>
    </location>
</feature>
<feature type="repeat" description="FU 22">
    <location>
        <begin position="1665"/>
        <end position="1712"/>
    </location>
</feature>
<feature type="region of interest" description="CRM (Cys-rich motif)">
    <location>
        <begin position="636"/>
        <end position="1727"/>
    </location>
</feature>
<feature type="region of interest" description="AC 1" evidence="1">
    <location>
        <begin position="1807"/>
        <end position="1826"/>
    </location>
</feature>
<feature type="region of interest" description="AC 2" evidence="1">
    <location>
        <begin position="1838"/>
        <end position="1860"/>
    </location>
</feature>
<feature type="short sequence motif" description="Cell attachment site" evidence="2">
    <location>
        <begin position="519"/>
        <end position="521"/>
    </location>
</feature>
<feature type="active site" description="Charge relay system" evidence="4">
    <location>
        <position position="171"/>
    </location>
</feature>
<feature type="active site" description="Charge relay system" evidence="4">
    <location>
        <position position="212"/>
    </location>
</feature>
<feature type="active site" description="Charge relay system" evidence="4">
    <location>
        <position position="386"/>
    </location>
</feature>
<feature type="site" description="Cleavage; by autolysis" evidence="1">
    <location>
        <begin position="114"/>
        <end position="115"/>
    </location>
</feature>
<feature type="glycosylation site" description="N-linked (GlcNAc...) asparagine" evidence="2">
    <location>
        <position position="225"/>
    </location>
</feature>
<feature type="glycosylation site" description="N-linked (GlcNAc...) asparagine" evidence="2">
    <location>
        <position position="381"/>
    </location>
</feature>
<feature type="glycosylation site" description="N-linked (GlcNAc...) asparagine" evidence="2">
    <location>
        <position position="665"/>
    </location>
</feature>
<feature type="glycosylation site" description="N-linked (GlcNAc...) asparagine" evidence="2">
    <location>
        <position position="752"/>
    </location>
</feature>
<feature type="glycosylation site" description="N-linked (GlcNAc...) asparagine" evidence="2">
    <location>
        <position position="802"/>
    </location>
</feature>
<feature type="glycosylation site" description="N-linked (GlcNAc...) asparagine" evidence="2">
    <location>
        <position position="852"/>
    </location>
</feature>
<feature type="glycosylation site" description="N-linked (GlcNAc...) asparagine" evidence="2">
    <location>
        <position position="1014"/>
    </location>
</feature>
<feature type="glycosylation site" description="N-linked (GlcNAc...) asparagine" evidence="2">
    <location>
        <position position="1191"/>
    </location>
</feature>
<feature type="glycosylation site" description="N-linked (GlcNAc...) asparagine" evidence="2">
    <location>
        <position position="1290"/>
    </location>
</feature>
<feature type="glycosylation site" description="N-linked (GlcNAc...) asparagine" evidence="2">
    <location>
        <position position="1497"/>
    </location>
</feature>
<feature type="glycosylation site" description="N-linked (GlcNAc...) asparagine" evidence="2">
    <location>
        <position position="1685"/>
    </location>
</feature>
<feature type="glycosylation site" description="N-linked (GlcNAc...) asparagine" evidence="2">
    <location>
        <position position="1707"/>
    </location>
</feature>
<feature type="splice variant" id="VSP_042017" description="In isoform PC6A." evidence="8 9 10 11">
    <original>GEYVDEHGHCQTCEASCAKCQGPTQEDCTTCPMTRIFD</original>
    <variation>ATEESWAEGGFCMLVKKNNLCQRKVLQQLCCKTCTFQG</variation>
    <location>
        <begin position="876"/>
        <end position="913"/>
    </location>
</feature>
<feature type="splice variant" id="VSP_042018" description="In isoform PC6A." evidence="8 9 10 11">
    <location>
        <begin position="914"/>
        <end position="1860"/>
    </location>
</feature>
<feature type="sequence conflict" description="In Ref. 1; AAC50643." evidence="12" ref="1">
    <original>G</original>
    <variation>D</variation>
    <location>
        <position position="2"/>
    </location>
</feature>
<feature type="sequence conflict" description="In Ref. 1; AAC50643." evidence="12" ref="1">
    <original>G</original>
    <variation>E</variation>
    <location>
        <position position="4"/>
    </location>
</feature>
<feature type="sequence conflict" description="In Ref. 1; AAC50643." evidence="12" ref="1">
    <original>F</original>
    <variation>S</variation>
    <location>
        <position position="118"/>
    </location>
</feature>
<feature type="sequence conflict" description="In Ref. 1; AAC50643." evidence="12" ref="1">
    <original>A</original>
    <variation>V</variation>
    <location>
        <position position="121"/>
    </location>
</feature>
<feature type="sequence conflict" description="In Ref. 7; AAA91807." evidence="12" ref="7">
    <original>R</original>
    <variation>A</variation>
    <location>
        <position position="511"/>
    </location>
</feature>
<feature type="sequence conflict" description="In Ref. 1; AAC50643." evidence="12" ref="1">
    <original>Q</original>
    <variation>R</variation>
    <location>
        <position position="601"/>
    </location>
</feature>
<gene>
    <name type="primary">PCSK5</name>
    <name type="synonym">PC5</name>
    <name type="synonym">PC6</name>
</gene>
<accession>Q92824</accession>
<accession>F5H2G7</accession>
<accession>Q13527</accession>
<accession>Q96EP4</accession>
<proteinExistence type="evidence at protein level"/>
<sequence>MGWGSRCCCPGRLDLLCVLALLGGCLLPVCRTRVYTNHWAVKIAGGFPEANRIASKYGFINIGQIGALKDYYHFYHSRTIKRSVISSRGTHSFISMEPKVEWIQQQVVKKRTKRDYDFSRAQSTYFNDPKWPSMWYMHCSDNTHPCQSDMNIEGAWKRGYTGKNIVVTILDDGIERTHPDLMQNYDALASCDVNGNDLDPMPRYDASNENKHGTRCAGEVAAAANNSHCTVGIAFNAKIGGVRMLDGDVTDMVEAKSVSFNPQHVHIYSASWGPDDDGKTVDGPAPLTRQAFENGVRMGRRGLGSVFVWASGNGGRSKDHCSCDGYTNSIYTISISSTAESGKKPWYLEECSSTLATTYSSGESYDKKIITTDLRQRCTDNHTGTSASAPMAAGIIALALEANPFLTWRDVQHVIVRTSRAGHLNANDWKTNAAGFKVSHLYGFGLMDAEAMVMEAEKWTTVPRQHVCVESTDRQIKTIRPNSAVRSIYKASGCSDNPNRHVNYLEHVVVRITITHPRRGDLAIYLTSPSGTRSQLLANRLFDHSMEGFKNWEFMTIHCWGERAAGDWVLEVYDTPSQLRNFKTPGKLKEWSLVLYGTSVQPYSPTNEFPKVERFRYSRVEDPTDDYGTEDYAGPCDPECSEVGCDGPGPDHCNDCLHYYYKLKNNTRICVSSCPPGHYHADKKRCRKCAPNCESCFGSHGDQCMSCKYGYFLNEETNSCVTHCPDGSYQDTKKNLCRKCSENCKTCTEFHNCTECRDGLSLQGSRCSVSCEDGRYFNGQDCQPCHRFCATCAGAGADGCINCTEGYFMEDGRCVQSCSISYYFDHSSENGYKSCKKCDISCLTCNGPGFKNCTSCPSGYLLDLGMCQMGAICKDGEYVDEHGHCQTCEASCAKCQGPTQEDCTTCPMTRIFDDGRCVSNCPSWKFEFENQCHPCHHTCQRCQGSGPTHCTSCGADNYGREHFLYQGECGDSCPEGHYATEGNTCLPCPDNCELCHSVHVCTRCMKGYFIAPTNHTCQKLECGQGEVQDPDYEECVPCEEGCLGCSLDDPGTCTSCAMGYYRFDHHCYKTCPEKTYSEEVECKACDSNCGSCDQNGCYWCEEGFFLLGGSCVRKCGPGFYGDQEMGECESCHRACETCTGPGHDECSSCQEGLQLLRGMCVHATKTQEEGKFWNDILRKLQPCHSSCKTCNGSATLCTSCPKGAYLLAQACVSSCPQGTWPSVRSGSCENCTEACAICSGADLCKKCQMQPGHPLFLHEGRCYSKCPEGSYAEDGICERCSSPCRTCEGNATNCHSCEGGHVLHHGVCQENCPERHVAVKGVCKHCPEMCQDCIHEKTCKECTPEFFLHDDMCHQSCPRGFYADSRHCVPCHKDCLECSGPKADDCELCLESSWVLYDGLCLEECPAGTYYEKETKECRDCHKSCLTCSSSGTCTTCQKGLIMNPRGSCMANEKCSPSEYWDEDAPGCKPCHVKCFHCMGPAEDQCQTCPMNSLLLNTTCVKDCPEGYYADEDSNRCAHCHSSCRTCEGRHSRQCHSCRPGWFQLGKECLLQCREGYYADNSTGRCERCNRSCKGCQGPRPTDCLSCDRFFFLLRSKGECHRSCPDHYYVEQSTQTCERCHPTCDQCKGKGALNCLSCVWSYHLMGGICTSDCLVGEYRVGEGEKFNCEKCHESCMECKGPGAKNCTLCPANLVLHMDDSHCLHCCNTSDPPSAQECCDCQDTTDECILRTSKVRPATEHFKTALFITSSMMLVLLLGAAVVVWKKSRGRVQPAAKAGYEKLADPNKSYSSYKSSYRESTSFEEDQVIEYRDRDYDEDDDDDIVYMGQDGTVYRKFKYGLLDDDDIDELEYDDESYSYYQ</sequence>
<keyword id="KW-0025">Alternative splicing</keyword>
<keyword id="KW-0165">Cleavage on pair of basic residues</keyword>
<keyword id="KW-0325">Glycoprotein</keyword>
<keyword id="KW-0378">Hydrolase</keyword>
<keyword id="KW-0472">Membrane</keyword>
<keyword id="KW-0635">Pregnancy</keyword>
<keyword id="KW-0645">Protease</keyword>
<keyword id="KW-1267">Proteomics identification</keyword>
<keyword id="KW-1185">Reference proteome</keyword>
<keyword id="KW-0677">Repeat</keyword>
<keyword id="KW-0964">Secreted</keyword>
<keyword id="KW-0720">Serine protease</keyword>
<keyword id="KW-0732">Signal</keyword>
<keyword id="KW-0812">Transmembrane</keyword>
<keyword id="KW-1133">Transmembrane helix</keyword>
<keyword id="KW-0865">Zymogen</keyword>
<name>PCSK5_HUMAN</name>
<evidence type="ECO:0000250" key="1"/>
<evidence type="ECO:0000255" key="2"/>
<evidence type="ECO:0000255" key="3">
    <source>
        <dbReference type="PROSITE-ProRule" id="PRU01173"/>
    </source>
</evidence>
<evidence type="ECO:0000255" key="4">
    <source>
        <dbReference type="PROSITE-ProRule" id="PRU01240"/>
    </source>
</evidence>
<evidence type="ECO:0000269" key="5">
    <source>
    </source>
</evidence>
<evidence type="ECO:0000269" key="6">
    <source>
    </source>
</evidence>
<evidence type="ECO:0000269" key="7">
    <source>
    </source>
</evidence>
<evidence type="ECO:0000303" key="8">
    <source>
    </source>
</evidence>
<evidence type="ECO:0000303" key="9">
    <source>
    </source>
</evidence>
<evidence type="ECO:0000303" key="10">
    <source>
    </source>
</evidence>
<evidence type="ECO:0000303" key="11">
    <source ref="7"/>
</evidence>
<evidence type="ECO:0000305" key="12"/>
<protein>
    <recommendedName>
        <fullName>Proprotein convertase subtilisin/kexin type 5</fullName>
        <ecNumber>3.4.21.-</ecNumber>
    </recommendedName>
    <alternativeName>
        <fullName>Proprotein convertase 5</fullName>
        <shortName>PC5</shortName>
    </alternativeName>
    <alternativeName>
        <fullName>Proprotein convertase 6</fullName>
        <shortName>PC6</shortName>
        <shortName>hPC6</shortName>
    </alternativeName>
    <alternativeName>
        <fullName>Subtilisin/kexin-like protease PC5</fullName>
    </alternativeName>
</protein>
<dbReference type="EC" id="3.4.21.-"/>
<dbReference type="EMBL" id="U56387">
    <property type="protein sequence ID" value="AAC50643.2"/>
    <property type="molecule type" value="mRNA"/>
</dbReference>
<dbReference type="EMBL" id="AL834522">
    <property type="protein sequence ID" value="CAD39178.1"/>
    <property type="molecule type" value="mRNA"/>
</dbReference>
<dbReference type="EMBL" id="AL359253">
    <property type="status" value="NOT_ANNOTATED_CDS"/>
    <property type="molecule type" value="Genomic_DNA"/>
</dbReference>
<dbReference type="EMBL" id="AL353607">
    <property type="status" value="NOT_ANNOTATED_CDS"/>
    <property type="molecule type" value="Genomic_DNA"/>
</dbReference>
<dbReference type="EMBL" id="AL391868">
    <property type="status" value="NOT_ANNOTATED_CDS"/>
    <property type="molecule type" value="Genomic_DNA"/>
</dbReference>
<dbReference type="EMBL" id="AL589653">
    <property type="status" value="NOT_ANNOTATED_CDS"/>
    <property type="molecule type" value="Genomic_DNA"/>
</dbReference>
<dbReference type="EMBL" id="CH471089">
    <property type="protein sequence ID" value="EAW62575.1"/>
    <property type="molecule type" value="Genomic_DNA"/>
</dbReference>
<dbReference type="EMBL" id="BC012064">
    <property type="protein sequence ID" value="AAH12064.1"/>
    <property type="molecule type" value="mRNA"/>
</dbReference>
<dbReference type="EMBL" id="U49114">
    <property type="protein sequence ID" value="AAA91807.1"/>
    <property type="molecule type" value="mRNA"/>
</dbReference>
<dbReference type="EMBL" id="AK122718">
    <property type="status" value="NOT_ANNOTATED_CDS"/>
    <property type="molecule type" value="mRNA"/>
</dbReference>
<dbReference type="CCDS" id="CCDS55320.1">
    <molecule id="Q92824-1"/>
</dbReference>
<dbReference type="CCDS" id="CCDS6652.1">
    <molecule id="Q92824-2"/>
</dbReference>
<dbReference type="PIR" id="G02428">
    <property type="entry name" value="G02428"/>
</dbReference>
<dbReference type="PIR" id="JC6148">
    <property type="entry name" value="JC6148"/>
</dbReference>
<dbReference type="RefSeq" id="NP_001177411.1">
    <molecule id="Q92824-1"/>
    <property type="nucleotide sequence ID" value="NM_001190482.2"/>
</dbReference>
<dbReference type="RefSeq" id="NP_006191.2">
    <molecule id="Q92824-2"/>
    <property type="nucleotide sequence ID" value="NM_006200.5"/>
</dbReference>
<dbReference type="SMR" id="Q92824"/>
<dbReference type="BioGRID" id="111152">
    <property type="interactions" value="115"/>
</dbReference>
<dbReference type="FunCoup" id="Q92824">
    <property type="interactions" value="753"/>
</dbReference>
<dbReference type="IntAct" id="Q92824">
    <property type="interactions" value="101"/>
</dbReference>
<dbReference type="STRING" id="9606.ENSP00000446280"/>
<dbReference type="BindingDB" id="Q92824"/>
<dbReference type="ChEMBL" id="CHEMBL2826"/>
<dbReference type="GuidetoPHARMACOLOGY" id="2385"/>
<dbReference type="MEROPS" id="S08.076"/>
<dbReference type="GlyCosmos" id="Q92824">
    <property type="glycosylation" value="12 sites, No reported glycans"/>
</dbReference>
<dbReference type="GlyGen" id="Q92824">
    <property type="glycosylation" value="13 sites, 2 N-linked glycans (4 sites)"/>
</dbReference>
<dbReference type="iPTMnet" id="Q92824"/>
<dbReference type="PhosphoSitePlus" id="Q92824"/>
<dbReference type="BioMuta" id="PCSK5"/>
<dbReference type="DMDM" id="357529585"/>
<dbReference type="jPOST" id="Q92824"/>
<dbReference type="MassIVE" id="Q92824"/>
<dbReference type="PaxDb" id="9606-ENSP00000446280"/>
<dbReference type="PeptideAtlas" id="Q92824"/>
<dbReference type="ProteomicsDB" id="75502">
    <molecule id="Q92824-1"/>
</dbReference>
<dbReference type="ProteomicsDB" id="75503">
    <molecule id="Q92824-2"/>
</dbReference>
<dbReference type="Antibodypedia" id="27199">
    <property type="antibodies" value="190 antibodies from 26 providers"/>
</dbReference>
<dbReference type="DNASU" id="5125"/>
<dbReference type="Ensembl" id="ENST00000376752.9">
    <molecule id="Q92824-2"/>
    <property type="protein sequence ID" value="ENSP00000365943.4"/>
    <property type="gene ID" value="ENSG00000099139.14"/>
</dbReference>
<dbReference type="Ensembl" id="ENST00000545128.5">
    <molecule id="Q92824-1"/>
    <property type="protein sequence ID" value="ENSP00000446280.1"/>
    <property type="gene ID" value="ENSG00000099139.14"/>
</dbReference>
<dbReference type="GeneID" id="5125"/>
<dbReference type="KEGG" id="hsa:5125"/>
<dbReference type="UCSC" id="uc004ajz.5">
    <molecule id="Q92824-1"/>
    <property type="organism name" value="human"/>
</dbReference>
<dbReference type="AGR" id="HGNC:8747"/>
<dbReference type="CTD" id="5125"/>
<dbReference type="DisGeNET" id="5125"/>
<dbReference type="GeneCards" id="PCSK5"/>
<dbReference type="HGNC" id="HGNC:8747">
    <property type="gene designation" value="PCSK5"/>
</dbReference>
<dbReference type="HPA" id="ENSG00000099139">
    <property type="expression patterns" value="Tissue enhanced (intestine)"/>
</dbReference>
<dbReference type="MalaCards" id="PCSK5"/>
<dbReference type="MIM" id="600488">
    <property type="type" value="gene"/>
</dbReference>
<dbReference type="neXtProt" id="NX_Q92824"/>
<dbReference type="OpenTargets" id="ENSG00000099139"/>
<dbReference type="PharmGKB" id="PA33093"/>
<dbReference type="VEuPathDB" id="HostDB:ENSG00000099139"/>
<dbReference type="eggNOG" id="KOG3525">
    <property type="taxonomic scope" value="Eukaryota"/>
</dbReference>
<dbReference type="GeneTree" id="ENSGT00940000155770"/>
<dbReference type="HOGENOM" id="CLU_003159_0_0_1"/>
<dbReference type="InParanoid" id="Q92824"/>
<dbReference type="OrthoDB" id="300641at2759"/>
<dbReference type="PAN-GO" id="Q92824">
    <property type="GO annotations" value="5 GO annotations based on evolutionary models"/>
</dbReference>
<dbReference type="PhylomeDB" id="Q92824"/>
<dbReference type="TreeFam" id="TF314277"/>
<dbReference type="BRENDA" id="3.4.21.B26">
    <property type="organism ID" value="2681"/>
</dbReference>
<dbReference type="PathwayCommons" id="Q92824"/>
<dbReference type="Reactome" id="R-HSA-167060">
    <property type="pathway name" value="NGF processing"/>
</dbReference>
<dbReference type="Reactome" id="R-HSA-8963889">
    <property type="pathway name" value="Assembly of active LPL and LIPC lipase complexes"/>
</dbReference>
<dbReference type="SignaLink" id="Q92824"/>
<dbReference type="SIGNOR" id="Q92824"/>
<dbReference type="BioGRID-ORCS" id="5125">
    <property type="hits" value="6 hits in 1145 CRISPR screens"/>
</dbReference>
<dbReference type="ChiTaRS" id="PCSK5">
    <property type="organism name" value="human"/>
</dbReference>
<dbReference type="GeneWiki" id="PCSK5"/>
<dbReference type="GenomeRNAi" id="5125"/>
<dbReference type="Pharos" id="Q92824">
    <property type="development level" value="Tchem"/>
</dbReference>
<dbReference type="PRO" id="PR:Q92824"/>
<dbReference type="Proteomes" id="UP000005640">
    <property type="component" value="Chromosome 9"/>
</dbReference>
<dbReference type="RNAct" id="Q92824">
    <property type="molecule type" value="protein"/>
</dbReference>
<dbReference type="Bgee" id="ENSG00000099139">
    <property type="expression patterns" value="Expressed in buccal mucosa cell and 192 other cell types or tissues"/>
</dbReference>
<dbReference type="ExpressionAtlas" id="Q92824">
    <property type="expression patterns" value="baseline and differential"/>
</dbReference>
<dbReference type="GO" id="GO:0005576">
    <property type="term" value="C:extracellular region"/>
    <property type="evidence" value="ECO:0000304"/>
    <property type="project" value="Reactome"/>
</dbReference>
<dbReference type="GO" id="GO:0005615">
    <property type="term" value="C:extracellular space"/>
    <property type="evidence" value="ECO:0000250"/>
    <property type="project" value="BHF-UCL"/>
</dbReference>
<dbReference type="GO" id="GO:0005794">
    <property type="term" value="C:Golgi apparatus"/>
    <property type="evidence" value="ECO:0000314"/>
    <property type="project" value="HPA"/>
</dbReference>
<dbReference type="GO" id="GO:0005796">
    <property type="term" value="C:Golgi lumen"/>
    <property type="evidence" value="ECO:0000304"/>
    <property type="project" value="Reactome"/>
</dbReference>
<dbReference type="GO" id="GO:0000139">
    <property type="term" value="C:Golgi membrane"/>
    <property type="evidence" value="ECO:0000318"/>
    <property type="project" value="GO_Central"/>
</dbReference>
<dbReference type="GO" id="GO:0005802">
    <property type="term" value="C:trans-Golgi network"/>
    <property type="evidence" value="ECO:0000318"/>
    <property type="project" value="GO_Central"/>
</dbReference>
<dbReference type="GO" id="GO:0004175">
    <property type="term" value="F:endopeptidase activity"/>
    <property type="evidence" value="ECO:0000269"/>
    <property type="project" value="Reactome"/>
</dbReference>
<dbReference type="GO" id="GO:0008233">
    <property type="term" value="F:peptidase activity"/>
    <property type="evidence" value="ECO:0000314"/>
    <property type="project" value="MGI"/>
</dbReference>
<dbReference type="GO" id="GO:0042277">
    <property type="term" value="F:peptide binding"/>
    <property type="evidence" value="ECO:0000250"/>
    <property type="project" value="BHF-UCL"/>
</dbReference>
<dbReference type="GO" id="GO:0004252">
    <property type="term" value="F:serine-type endopeptidase activity"/>
    <property type="evidence" value="ECO:0000314"/>
    <property type="project" value="BHF-UCL"/>
</dbReference>
<dbReference type="GO" id="GO:0009952">
    <property type="term" value="P:anterior/posterior pattern specification"/>
    <property type="evidence" value="ECO:0000315"/>
    <property type="project" value="BHF-UCL"/>
</dbReference>
<dbReference type="GO" id="GO:0007267">
    <property type="term" value="P:cell-cell signaling"/>
    <property type="evidence" value="ECO:0000304"/>
    <property type="project" value="ProtInc"/>
</dbReference>
<dbReference type="GO" id="GO:0140447">
    <property type="term" value="P:cytokine precursor processing"/>
    <property type="evidence" value="ECO:0000250"/>
    <property type="project" value="BHF-UCL"/>
</dbReference>
<dbReference type="GO" id="GO:0007566">
    <property type="term" value="P:embryo implantation"/>
    <property type="evidence" value="ECO:0000250"/>
    <property type="project" value="BHF-UCL"/>
</dbReference>
<dbReference type="GO" id="GO:0048566">
    <property type="term" value="P:embryonic digestive tract development"/>
    <property type="evidence" value="ECO:0000315"/>
    <property type="project" value="BHF-UCL"/>
</dbReference>
<dbReference type="GO" id="GO:0048706">
    <property type="term" value="P:embryonic skeletal system development"/>
    <property type="evidence" value="ECO:0000315"/>
    <property type="project" value="BHF-UCL"/>
</dbReference>
<dbReference type="GO" id="GO:0007507">
    <property type="term" value="P:heart development"/>
    <property type="evidence" value="ECO:0000250"/>
    <property type="project" value="BHF-UCL"/>
</dbReference>
<dbReference type="GO" id="GO:0001822">
    <property type="term" value="P:kidney development"/>
    <property type="evidence" value="ECO:0000315"/>
    <property type="project" value="BHF-UCL"/>
</dbReference>
<dbReference type="GO" id="GO:0035108">
    <property type="term" value="P:limb morphogenesis"/>
    <property type="evidence" value="ECO:0000250"/>
    <property type="project" value="BHF-UCL"/>
</dbReference>
<dbReference type="GO" id="GO:0043043">
    <property type="term" value="P:peptide biosynthetic process"/>
    <property type="evidence" value="ECO:0000314"/>
    <property type="project" value="BHF-UCL"/>
</dbReference>
<dbReference type="GO" id="GO:0016486">
    <property type="term" value="P:peptide hormone processing"/>
    <property type="evidence" value="ECO:0000314"/>
    <property type="project" value="BHF-UCL"/>
</dbReference>
<dbReference type="GO" id="GO:0034369">
    <property type="term" value="P:plasma lipoprotein particle remodeling"/>
    <property type="evidence" value="ECO:0000304"/>
    <property type="project" value="Reactome"/>
</dbReference>
<dbReference type="GO" id="GO:0016485">
    <property type="term" value="P:protein processing"/>
    <property type="evidence" value="ECO:0000314"/>
    <property type="project" value="MGI"/>
</dbReference>
<dbReference type="GO" id="GO:0002001">
    <property type="term" value="P:renin secretion into blood stream"/>
    <property type="evidence" value="ECO:0000270"/>
    <property type="project" value="BHF-UCL"/>
</dbReference>
<dbReference type="GO" id="GO:0030323">
    <property type="term" value="P:respiratory tube development"/>
    <property type="evidence" value="ECO:0000250"/>
    <property type="project" value="BHF-UCL"/>
</dbReference>
<dbReference type="GO" id="GO:0006465">
    <property type="term" value="P:signal peptide processing"/>
    <property type="evidence" value="ECO:0000314"/>
    <property type="project" value="HGNC-UCL"/>
</dbReference>
<dbReference type="GO" id="GO:0019058">
    <property type="term" value="P:viral life cycle"/>
    <property type="evidence" value="ECO:0000270"/>
    <property type="project" value="BHF-UCL"/>
</dbReference>
<dbReference type="CDD" id="cd00064">
    <property type="entry name" value="FU"/>
    <property type="match status" value="16"/>
</dbReference>
<dbReference type="CDD" id="cd04059">
    <property type="entry name" value="Peptidases_S8_Protein_convertases_Kexins_Furin-like"/>
    <property type="match status" value="1"/>
</dbReference>
<dbReference type="FunFam" id="2.10.220.10:FF:000011">
    <property type="entry name" value="Proprotein convertase subtilisin/kexin type 5"/>
    <property type="match status" value="1"/>
</dbReference>
<dbReference type="FunFam" id="2.10.220.10:FF:000018">
    <property type="entry name" value="Proprotein convertase subtilisin/kexin type 5"/>
    <property type="match status" value="1"/>
</dbReference>
<dbReference type="FunFam" id="2.10.220.10:FF:000029">
    <property type="entry name" value="Proprotein convertase subtilisin/kexin type 5"/>
    <property type="match status" value="1"/>
</dbReference>
<dbReference type="FunFam" id="2.10.220.10:FF:000030">
    <property type="entry name" value="Proprotein convertase subtilisin/kexin type 5"/>
    <property type="match status" value="1"/>
</dbReference>
<dbReference type="FunFam" id="2.10.220.10:FF:000032">
    <property type="entry name" value="Proprotein convertase subtilisin/kexin type 5"/>
    <property type="match status" value="1"/>
</dbReference>
<dbReference type="FunFam" id="2.10.220.10:FF:000033">
    <property type="entry name" value="Proprotein convertase subtilisin/kexin type 5"/>
    <property type="match status" value="1"/>
</dbReference>
<dbReference type="FunFam" id="2.10.220.10:FF:000034">
    <property type="entry name" value="Proprotein convertase subtilisin/kexin type 5"/>
    <property type="match status" value="1"/>
</dbReference>
<dbReference type="FunFam" id="2.10.220.10:FF:000035">
    <property type="entry name" value="Proprotein convertase subtilisin/kexin type 5"/>
    <property type="match status" value="1"/>
</dbReference>
<dbReference type="FunFam" id="2.10.220.10:FF:000037">
    <property type="entry name" value="Proprotein convertase subtilisin/kexin type 5"/>
    <property type="match status" value="1"/>
</dbReference>
<dbReference type="FunFam" id="2.10.220.10:FF:000042">
    <property type="entry name" value="Proprotein convertase subtilisin/kexin type 5"/>
    <property type="match status" value="1"/>
</dbReference>
<dbReference type="FunFam" id="2.10.220.10:FF:000044">
    <property type="entry name" value="Proprotein convertase subtilisin/kexin type 5"/>
    <property type="match status" value="1"/>
</dbReference>
<dbReference type="FunFam" id="2.10.220.10:FF:000053">
    <property type="entry name" value="Proprotein convertase subtilisin/kexin type 5"/>
    <property type="match status" value="1"/>
</dbReference>
<dbReference type="FunFam" id="2.60.120.260:FF:000006">
    <property type="entry name" value="Proprotein convertase subtilisin/kexin type 5"/>
    <property type="match status" value="1"/>
</dbReference>
<dbReference type="FunFam" id="3.30.70.850:FF:000001">
    <property type="entry name" value="Proprotein convertase subtilisin/kexin type 5"/>
    <property type="match status" value="1"/>
</dbReference>
<dbReference type="FunFam" id="3.40.50.200:FF:000002">
    <property type="entry name" value="Proprotein convertase subtilisin/kexin type 5"/>
    <property type="match status" value="1"/>
</dbReference>
<dbReference type="Gene3D" id="2.60.120.260">
    <property type="entry name" value="Galactose-binding domain-like"/>
    <property type="match status" value="1"/>
</dbReference>
<dbReference type="Gene3D" id="2.10.220.10">
    <property type="entry name" value="Hormone Receptor, Insulin-like Growth Factor Receptor 1, Chain A, domain 2"/>
    <property type="match status" value="13"/>
</dbReference>
<dbReference type="Gene3D" id="3.30.70.850">
    <property type="entry name" value="Peptidase S8, pro-domain"/>
    <property type="match status" value="1"/>
</dbReference>
<dbReference type="Gene3D" id="3.40.50.200">
    <property type="entry name" value="Peptidase S8/S53 domain"/>
    <property type="match status" value="1"/>
</dbReference>
<dbReference type="InterPro" id="IPR000742">
    <property type="entry name" value="EGF-like_dom"/>
</dbReference>
<dbReference type="InterPro" id="IPR006212">
    <property type="entry name" value="Furin_repeat"/>
</dbReference>
<dbReference type="InterPro" id="IPR008979">
    <property type="entry name" value="Galactose-bd-like_sf"/>
</dbReference>
<dbReference type="InterPro" id="IPR032778">
    <property type="entry name" value="GF_recep_IV"/>
</dbReference>
<dbReference type="InterPro" id="IPR009030">
    <property type="entry name" value="Growth_fac_rcpt_cys_sf"/>
</dbReference>
<dbReference type="InterPro" id="IPR034182">
    <property type="entry name" value="Kexin/furin"/>
</dbReference>
<dbReference type="InterPro" id="IPR002884">
    <property type="entry name" value="P_dom"/>
</dbReference>
<dbReference type="InterPro" id="IPR000209">
    <property type="entry name" value="Peptidase_S8/S53_dom"/>
</dbReference>
<dbReference type="InterPro" id="IPR036852">
    <property type="entry name" value="Peptidase_S8/S53_dom_sf"/>
</dbReference>
<dbReference type="InterPro" id="IPR023827">
    <property type="entry name" value="Peptidase_S8_Asp-AS"/>
</dbReference>
<dbReference type="InterPro" id="IPR022398">
    <property type="entry name" value="Peptidase_S8_His-AS"/>
</dbReference>
<dbReference type="InterPro" id="IPR023828">
    <property type="entry name" value="Peptidase_S8_Ser-AS"/>
</dbReference>
<dbReference type="InterPro" id="IPR015500">
    <property type="entry name" value="Peptidase_S8_subtilisin-rel"/>
</dbReference>
<dbReference type="InterPro" id="IPR032815">
    <property type="entry name" value="S8_pro-domain"/>
</dbReference>
<dbReference type="InterPro" id="IPR038466">
    <property type="entry name" value="S8_pro-domain_sf"/>
</dbReference>
<dbReference type="PANTHER" id="PTHR42884:SF3">
    <property type="entry name" value="FURIN-LIKE PROTEASE 1, ISOFORMS 1_1-X_2"/>
    <property type="match status" value="1"/>
</dbReference>
<dbReference type="PANTHER" id="PTHR42884">
    <property type="entry name" value="PROPROTEIN CONVERTASE SUBTILISIN/KEXIN-RELATED"/>
    <property type="match status" value="1"/>
</dbReference>
<dbReference type="Pfam" id="PF14843">
    <property type="entry name" value="GF_recep_IV"/>
    <property type="match status" value="1"/>
</dbReference>
<dbReference type="Pfam" id="PF01483">
    <property type="entry name" value="P_proprotein"/>
    <property type="match status" value="1"/>
</dbReference>
<dbReference type="Pfam" id="PF00082">
    <property type="entry name" value="Peptidase_S8"/>
    <property type="match status" value="1"/>
</dbReference>
<dbReference type="Pfam" id="PF16470">
    <property type="entry name" value="S8_pro-domain"/>
    <property type="match status" value="1"/>
</dbReference>
<dbReference type="PRINTS" id="PR00723">
    <property type="entry name" value="SUBTILISIN"/>
</dbReference>
<dbReference type="SMART" id="SM00181">
    <property type="entry name" value="EGF"/>
    <property type="match status" value="16"/>
</dbReference>
<dbReference type="SMART" id="SM01411">
    <property type="entry name" value="Ephrin_rec_like"/>
    <property type="match status" value="8"/>
</dbReference>
<dbReference type="SMART" id="SM00261">
    <property type="entry name" value="FU"/>
    <property type="match status" value="22"/>
</dbReference>
<dbReference type="SUPFAM" id="SSF49785">
    <property type="entry name" value="Galactose-binding domain-like"/>
    <property type="match status" value="1"/>
</dbReference>
<dbReference type="SUPFAM" id="SSF57184">
    <property type="entry name" value="Growth factor receptor domain"/>
    <property type="match status" value="7"/>
</dbReference>
<dbReference type="SUPFAM" id="SSF54897">
    <property type="entry name" value="Protease propeptides/inhibitors"/>
    <property type="match status" value="1"/>
</dbReference>
<dbReference type="SUPFAM" id="SSF52743">
    <property type="entry name" value="Subtilisin-like"/>
    <property type="match status" value="1"/>
</dbReference>
<dbReference type="PROSITE" id="PS51829">
    <property type="entry name" value="P_HOMO_B"/>
    <property type="match status" value="1"/>
</dbReference>
<dbReference type="PROSITE" id="PS51892">
    <property type="entry name" value="SUBTILASE"/>
    <property type="match status" value="1"/>
</dbReference>
<dbReference type="PROSITE" id="PS00136">
    <property type="entry name" value="SUBTILASE_ASP"/>
    <property type="match status" value="1"/>
</dbReference>
<dbReference type="PROSITE" id="PS00137">
    <property type="entry name" value="SUBTILASE_HIS"/>
    <property type="match status" value="1"/>
</dbReference>
<dbReference type="PROSITE" id="PS00138">
    <property type="entry name" value="SUBTILASE_SER"/>
    <property type="match status" value="1"/>
</dbReference>
<reference key="1">
    <citation type="journal article" date="1996" name="Proc. Natl. Acad. Sci. U.S.A.">
        <title>Isolation of the human PC6 gene encoding the putative host protease for HIV-1 gp160 processing in CD4+ T lymphocytes.</title>
        <authorList>
            <person name="Miranda L."/>
            <person name="Wolf J."/>
            <person name="Pichuantes S."/>
            <person name="Duke R."/>
            <person name="Franzusoff A."/>
        </authorList>
    </citation>
    <scope>NUCLEOTIDE SEQUENCE [MRNA] (ISOFORM PC6A)</scope>
    <scope>ALTERNATIVE SPLICING</scope>
    <source>
        <tissue>T-cell</tissue>
    </source>
</reference>
<reference key="2">
    <citation type="submission" date="2000-07" db="EMBL/GenBank/DDBJ databases">
        <authorList>
            <person name="Franzusoff A."/>
            <person name="Miranda L."/>
            <person name="Wolf J."/>
            <person name="Pichuantes S."/>
            <person name="Lu Y."/>
            <person name="Duke R."/>
        </authorList>
    </citation>
    <scope>SEQUENCE REVISION</scope>
</reference>
<reference key="3">
    <citation type="journal article" date="2007" name="BMC Genomics">
        <title>The full-ORF clone resource of the German cDNA consortium.</title>
        <authorList>
            <person name="Bechtel S."/>
            <person name="Rosenfelder H."/>
            <person name="Duda A."/>
            <person name="Schmidt C.P."/>
            <person name="Ernst U."/>
            <person name="Wellenreuther R."/>
            <person name="Mehrle A."/>
            <person name="Schuster C."/>
            <person name="Bahr A."/>
            <person name="Bloecker H."/>
            <person name="Heubner D."/>
            <person name="Hoerlein A."/>
            <person name="Michel G."/>
            <person name="Wedler H."/>
            <person name="Koehrer K."/>
            <person name="Ottenwaelder B."/>
            <person name="Poustka A."/>
            <person name="Wiemann S."/>
            <person name="Schupp I."/>
        </authorList>
    </citation>
    <scope>NUCLEOTIDE SEQUENCE [LARGE SCALE MRNA] (ISOFORM PC6A)</scope>
    <source>
        <tissue>Lymph node</tissue>
    </source>
</reference>
<reference key="4">
    <citation type="journal article" date="2004" name="Nature">
        <title>DNA sequence and analysis of human chromosome 9.</title>
        <authorList>
            <person name="Humphray S.J."/>
            <person name="Oliver K."/>
            <person name="Hunt A.R."/>
            <person name="Plumb R.W."/>
            <person name="Loveland J.E."/>
            <person name="Howe K.L."/>
            <person name="Andrews T.D."/>
            <person name="Searle S."/>
            <person name="Hunt S.E."/>
            <person name="Scott C.E."/>
            <person name="Jones M.C."/>
            <person name="Ainscough R."/>
            <person name="Almeida J.P."/>
            <person name="Ambrose K.D."/>
            <person name="Ashwell R.I.S."/>
            <person name="Babbage A.K."/>
            <person name="Babbage S."/>
            <person name="Bagguley C.L."/>
            <person name="Bailey J."/>
            <person name="Banerjee R."/>
            <person name="Barker D.J."/>
            <person name="Barlow K.F."/>
            <person name="Bates K."/>
            <person name="Beasley H."/>
            <person name="Beasley O."/>
            <person name="Bird C.P."/>
            <person name="Bray-Allen S."/>
            <person name="Brown A.J."/>
            <person name="Brown J.Y."/>
            <person name="Burford D."/>
            <person name="Burrill W."/>
            <person name="Burton J."/>
            <person name="Carder C."/>
            <person name="Carter N.P."/>
            <person name="Chapman J.C."/>
            <person name="Chen Y."/>
            <person name="Clarke G."/>
            <person name="Clark S.Y."/>
            <person name="Clee C.M."/>
            <person name="Clegg S."/>
            <person name="Collier R.E."/>
            <person name="Corby N."/>
            <person name="Crosier M."/>
            <person name="Cummings A.T."/>
            <person name="Davies J."/>
            <person name="Dhami P."/>
            <person name="Dunn M."/>
            <person name="Dutta I."/>
            <person name="Dyer L.W."/>
            <person name="Earthrowl M.E."/>
            <person name="Faulkner L."/>
            <person name="Fleming C.J."/>
            <person name="Frankish A."/>
            <person name="Frankland J.A."/>
            <person name="French L."/>
            <person name="Fricker D.G."/>
            <person name="Garner P."/>
            <person name="Garnett J."/>
            <person name="Ghori J."/>
            <person name="Gilbert J.G.R."/>
            <person name="Glison C."/>
            <person name="Grafham D.V."/>
            <person name="Gribble S."/>
            <person name="Griffiths C."/>
            <person name="Griffiths-Jones S."/>
            <person name="Grocock R."/>
            <person name="Guy J."/>
            <person name="Hall R.E."/>
            <person name="Hammond S."/>
            <person name="Harley J.L."/>
            <person name="Harrison E.S.I."/>
            <person name="Hart E.A."/>
            <person name="Heath P.D."/>
            <person name="Henderson C.D."/>
            <person name="Hopkins B.L."/>
            <person name="Howard P.J."/>
            <person name="Howden P.J."/>
            <person name="Huckle E."/>
            <person name="Johnson C."/>
            <person name="Johnson D."/>
            <person name="Joy A.A."/>
            <person name="Kay M."/>
            <person name="Keenan S."/>
            <person name="Kershaw J.K."/>
            <person name="Kimberley A.M."/>
            <person name="King A."/>
            <person name="Knights A."/>
            <person name="Laird G.K."/>
            <person name="Langford C."/>
            <person name="Lawlor S."/>
            <person name="Leongamornlert D.A."/>
            <person name="Leversha M."/>
            <person name="Lloyd C."/>
            <person name="Lloyd D.M."/>
            <person name="Lovell J."/>
            <person name="Martin S."/>
            <person name="Mashreghi-Mohammadi M."/>
            <person name="Matthews L."/>
            <person name="McLaren S."/>
            <person name="McLay K.E."/>
            <person name="McMurray A."/>
            <person name="Milne S."/>
            <person name="Nickerson T."/>
            <person name="Nisbett J."/>
            <person name="Nordsiek G."/>
            <person name="Pearce A.V."/>
            <person name="Peck A.I."/>
            <person name="Porter K.M."/>
            <person name="Pandian R."/>
            <person name="Pelan S."/>
            <person name="Phillimore B."/>
            <person name="Povey S."/>
            <person name="Ramsey Y."/>
            <person name="Rand V."/>
            <person name="Scharfe M."/>
            <person name="Sehra H.K."/>
            <person name="Shownkeen R."/>
            <person name="Sims S.K."/>
            <person name="Skuce C.D."/>
            <person name="Smith M."/>
            <person name="Steward C.A."/>
            <person name="Swarbreck D."/>
            <person name="Sycamore N."/>
            <person name="Tester J."/>
            <person name="Thorpe A."/>
            <person name="Tracey A."/>
            <person name="Tromans A."/>
            <person name="Thomas D.W."/>
            <person name="Wall M."/>
            <person name="Wallis J.M."/>
            <person name="West A.P."/>
            <person name="Whitehead S.L."/>
            <person name="Willey D.L."/>
            <person name="Williams S.A."/>
            <person name="Wilming L."/>
            <person name="Wray P.W."/>
            <person name="Young L."/>
            <person name="Ashurst J.L."/>
            <person name="Coulson A."/>
            <person name="Blocker H."/>
            <person name="Durbin R.M."/>
            <person name="Sulston J.E."/>
            <person name="Hubbard T."/>
            <person name="Jackson M.J."/>
            <person name="Bentley D.R."/>
            <person name="Beck S."/>
            <person name="Rogers J."/>
            <person name="Dunham I."/>
        </authorList>
    </citation>
    <scope>NUCLEOTIDE SEQUENCE [LARGE SCALE GENOMIC DNA]</scope>
</reference>
<reference key="5">
    <citation type="submission" date="2005-07" db="EMBL/GenBank/DDBJ databases">
        <authorList>
            <person name="Mural R.J."/>
            <person name="Istrail S."/>
            <person name="Sutton G.G."/>
            <person name="Florea L."/>
            <person name="Halpern A.L."/>
            <person name="Mobarry C.M."/>
            <person name="Lippert R."/>
            <person name="Walenz B."/>
            <person name="Shatkay H."/>
            <person name="Dew I."/>
            <person name="Miller J.R."/>
            <person name="Flanigan M.J."/>
            <person name="Edwards N.J."/>
            <person name="Bolanos R."/>
            <person name="Fasulo D."/>
            <person name="Halldorsson B.V."/>
            <person name="Hannenhalli S."/>
            <person name="Turner R."/>
            <person name="Yooseph S."/>
            <person name="Lu F."/>
            <person name="Nusskern D.R."/>
            <person name="Shue B.C."/>
            <person name="Zheng X.H."/>
            <person name="Zhong F."/>
            <person name="Delcher A.L."/>
            <person name="Huson D.H."/>
            <person name="Kravitz S.A."/>
            <person name="Mouchard L."/>
            <person name="Reinert K."/>
            <person name="Remington K.A."/>
            <person name="Clark A.G."/>
            <person name="Waterman M.S."/>
            <person name="Eichler E.E."/>
            <person name="Adams M.D."/>
            <person name="Hunkapiller M.W."/>
            <person name="Myers E.W."/>
            <person name="Venter J.C."/>
        </authorList>
    </citation>
    <scope>NUCLEOTIDE SEQUENCE [LARGE SCALE GENOMIC DNA]</scope>
</reference>
<reference key="6">
    <citation type="journal article" date="2004" name="Genome Res.">
        <title>The status, quality, and expansion of the NIH full-length cDNA project: the Mammalian Gene Collection (MGC).</title>
        <authorList>
            <consortium name="The MGC Project Team"/>
        </authorList>
    </citation>
    <scope>NUCLEOTIDE SEQUENCE [LARGE SCALE MRNA] (ISOFORM PC6A)</scope>
    <source>
        <tissue>Kidney</tissue>
    </source>
</reference>
<reference key="7">
    <citation type="submission" date="1996-02" db="EMBL/GenBank/DDBJ databases">
        <authorList>
            <person name="Reudelhuber T.L."/>
        </authorList>
    </citation>
    <scope>NUCLEOTIDE SEQUENCE [MRNA] OF 15-913 (ISOFORM PC6A)</scope>
</reference>
<reference key="8">
    <citation type="journal article" date="2004" name="Nat. Genet.">
        <title>Complete sequencing and characterization of 21,243 full-length human cDNAs.</title>
        <authorList>
            <person name="Ota T."/>
            <person name="Suzuki Y."/>
            <person name="Nishikawa T."/>
            <person name="Otsuki T."/>
            <person name="Sugiyama T."/>
            <person name="Irie R."/>
            <person name="Wakamatsu A."/>
            <person name="Hayashi K."/>
            <person name="Sato H."/>
            <person name="Nagai K."/>
            <person name="Kimura K."/>
            <person name="Makita H."/>
            <person name="Sekine M."/>
            <person name="Obayashi M."/>
            <person name="Nishi T."/>
            <person name="Shibahara T."/>
            <person name="Tanaka T."/>
            <person name="Ishii S."/>
            <person name="Yamamoto J."/>
            <person name="Saito K."/>
            <person name="Kawai Y."/>
            <person name="Isono Y."/>
            <person name="Nakamura Y."/>
            <person name="Nagahari K."/>
            <person name="Murakami K."/>
            <person name="Yasuda T."/>
            <person name="Iwayanagi T."/>
            <person name="Wagatsuma M."/>
            <person name="Shiratori A."/>
            <person name="Sudo H."/>
            <person name="Hosoiri T."/>
            <person name="Kaku Y."/>
            <person name="Kodaira H."/>
            <person name="Kondo H."/>
            <person name="Sugawara M."/>
            <person name="Takahashi M."/>
            <person name="Kanda K."/>
            <person name="Yokoi T."/>
            <person name="Furuya T."/>
            <person name="Kikkawa E."/>
            <person name="Omura Y."/>
            <person name="Abe K."/>
            <person name="Kamihara K."/>
            <person name="Katsuta N."/>
            <person name="Sato K."/>
            <person name="Tanikawa M."/>
            <person name="Yamazaki M."/>
            <person name="Ninomiya K."/>
            <person name="Ishibashi T."/>
            <person name="Yamashita H."/>
            <person name="Murakawa K."/>
            <person name="Fujimori K."/>
            <person name="Tanai H."/>
            <person name="Kimata M."/>
            <person name="Watanabe M."/>
            <person name="Hiraoka S."/>
            <person name="Chiba Y."/>
            <person name="Ishida S."/>
            <person name="Ono Y."/>
            <person name="Takiguchi S."/>
            <person name="Watanabe S."/>
            <person name="Yosida M."/>
            <person name="Hotuta T."/>
            <person name="Kusano J."/>
            <person name="Kanehori K."/>
            <person name="Takahashi-Fujii A."/>
            <person name="Hara H."/>
            <person name="Tanase T.-O."/>
            <person name="Nomura Y."/>
            <person name="Togiya S."/>
            <person name="Komai F."/>
            <person name="Hara R."/>
            <person name="Takeuchi K."/>
            <person name="Arita M."/>
            <person name="Imose N."/>
            <person name="Musashino K."/>
            <person name="Yuuki H."/>
            <person name="Oshima A."/>
            <person name="Sasaki N."/>
            <person name="Aotsuka S."/>
            <person name="Yoshikawa Y."/>
            <person name="Matsunawa H."/>
            <person name="Ichihara T."/>
            <person name="Shiohata N."/>
            <person name="Sano S."/>
            <person name="Moriya S."/>
            <person name="Momiyama H."/>
            <person name="Satoh N."/>
            <person name="Takami S."/>
            <person name="Terashima Y."/>
            <person name="Suzuki O."/>
            <person name="Nakagawa S."/>
            <person name="Senoh A."/>
            <person name="Mizoguchi H."/>
            <person name="Goto Y."/>
            <person name="Shimizu F."/>
            <person name="Wakebe H."/>
            <person name="Hishigaki H."/>
            <person name="Watanabe T."/>
            <person name="Sugiyama A."/>
            <person name="Takemoto M."/>
            <person name="Kawakami B."/>
            <person name="Yamazaki M."/>
            <person name="Watanabe K."/>
            <person name="Kumagai A."/>
            <person name="Itakura S."/>
            <person name="Fukuzumi Y."/>
            <person name="Fujimori Y."/>
            <person name="Komiyama M."/>
            <person name="Tashiro H."/>
            <person name="Tanigami A."/>
            <person name="Fujiwara T."/>
            <person name="Ono T."/>
            <person name="Yamada K."/>
            <person name="Fujii Y."/>
            <person name="Ozaki K."/>
            <person name="Hirao M."/>
            <person name="Ohmori Y."/>
            <person name="Kawabata A."/>
            <person name="Hikiji T."/>
            <person name="Kobatake N."/>
            <person name="Inagaki H."/>
            <person name="Ikema Y."/>
            <person name="Okamoto S."/>
            <person name="Okitani R."/>
            <person name="Kawakami T."/>
            <person name="Noguchi S."/>
            <person name="Itoh T."/>
            <person name="Shigeta K."/>
            <person name="Senba T."/>
            <person name="Matsumura K."/>
            <person name="Nakajima Y."/>
            <person name="Mizuno T."/>
            <person name="Morinaga M."/>
            <person name="Sasaki M."/>
            <person name="Togashi T."/>
            <person name="Oyama M."/>
            <person name="Hata H."/>
            <person name="Watanabe M."/>
            <person name="Komatsu T."/>
            <person name="Mizushima-Sugano J."/>
            <person name="Satoh T."/>
            <person name="Shirai Y."/>
            <person name="Takahashi Y."/>
            <person name="Nakagawa K."/>
            <person name="Okumura K."/>
            <person name="Nagase T."/>
            <person name="Nomura N."/>
            <person name="Kikuchi H."/>
            <person name="Masuho Y."/>
            <person name="Yamashita R."/>
            <person name="Nakai K."/>
            <person name="Yada T."/>
            <person name="Nakamura Y."/>
            <person name="Ohara O."/>
            <person name="Isogai T."/>
            <person name="Sugano S."/>
        </authorList>
    </citation>
    <scope>NUCLEOTIDE SEQUENCE [LARGE SCALE MRNA] OF 1166-1860 (ISOFORM PC6B)</scope>
    <source>
        <tissue>Tongue</tissue>
    </source>
</reference>
<reference key="9">
    <citation type="journal article" date="2009" name="J. Proteome Res.">
        <title>Proteomic identification of caldesmon as a physiological substrate of proprotein convertase 6 in human uterine decidual cells essential for pregnancy establishment.</title>
        <authorList>
            <person name="Kilpatrick L.M."/>
            <person name="Stephens A.N."/>
            <person name="Hardman B.M."/>
            <person name="Salamonsen L.A."/>
            <person name="Li Y."/>
            <person name="Stanton P.G."/>
            <person name="Nie G."/>
        </authorList>
    </citation>
    <scope>FUNCTION IN PREGNANCY ESTABLISHMENT</scope>
</reference>
<reference key="10">
    <citation type="journal article" date="2010" name="Endocrinology">
        <title>Posttranslational activation of bone morphogenetic protein 2 is mediated by proprotein convertase 6 during decidualization for pregnancy establishment.</title>
        <authorList>
            <person name="Heng S."/>
            <person name="Paule S."/>
            <person name="Hardman B."/>
            <person name="Li Y."/>
            <person name="Singh H."/>
            <person name="Rainczuk A."/>
            <person name="Stephens A.N."/>
            <person name="Nie G."/>
        </authorList>
    </citation>
    <scope>FUNCTION IN PREGNANCY ESTABLISHMENT</scope>
</reference>
<reference key="11">
    <citation type="journal article" date="2012" name="Hum. Reprod.">
        <title>Cleavage of endometrial alpha-integrins into their functional forms is mediated by proprotein convertase 5/6.</title>
        <authorList>
            <person name="Paule S."/>
            <person name="Aljofan M."/>
            <person name="Simon C."/>
            <person name="Rombauts L.J."/>
            <person name="Nie G."/>
        </authorList>
    </citation>
    <scope>FUNCTION</scope>
</reference>
<comment type="function">
    <text evidence="5 6 7">Serine endoprotease that processes various proproteins by cleavage at paired basic amino acids, recognizing the RXXX[KR]R consensus motif. Likely functions in the constitutive and regulated secretory pathways. Plays an essential role in pregnancy establishment by proteolytic activation of a number of important factors such as BMP2, CALD1 and alpha-integrins.</text>
</comment>
<comment type="interaction">
    <interactant intactId="EBI-751290">
        <id>Q92824</id>
    </interactant>
    <interactant intactId="EBI-374781">
        <id>O76003</id>
        <label>GLRX3</label>
    </interactant>
    <organismsDiffer>false</organismsDiffer>
    <experiments>3</experiments>
</comment>
<comment type="interaction">
    <interactant intactId="EBI-751290">
        <id>Q92824</id>
    </interactant>
    <interactant intactId="EBI-10172290">
        <id>P60409</id>
        <label>KRTAP10-7</label>
    </interactant>
    <organismsDiffer>false</organismsDiffer>
    <experiments>3</experiments>
</comment>
<comment type="interaction">
    <interactant intactId="EBI-751290">
        <id>Q92824</id>
    </interactant>
    <interactant intactId="EBI-10171774">
        <id>P60410</id>
        <label>KRTAP10-8</label>
    </interactant>
    <organismsDiffer>false</organismsDiffer>
    <experiments>3</experiments>
</comment>
<comment type="interaction">
    <interactant intactId="EBI-751290">
        <id>Q92824</id>
    </interactant>
    <interactant intactId="EBI-739863">
        <id>Q9BQ66</id>
        <label>KRTAP4-12</label>
    </interactant>
    <organismsDiffer>false</organismsDiffer>
    <experiments>3</experiments>
</comment>
<comment type="interaction">
    <interactant intactId="EBI-751290">
        <id>Q92824</id>
    </interactant>
    <interactant intactId="EBI-3958099">
        <id>P26371</id>
        <label>KRTAP5-9</label>
    </interactant>
    <organismsDiffer>false</organismsDiffer>
    <experiments>3</experiments>
</comment>
<comment type="interaction">
    <interactant intactId="EBI-751290">
        <id>Q92824</id>
    </interactant>
    <interactant intactId="EBI-10245291">
        <id>Q5T5A8</id>
        <label>LCE3C</label>
    </interactant>
    <organismsDiffer>false</organismsDiffer>
    <experiments>3</experiments>
</comment>
<comment type="interaction">
    <interactant intactId="EBI-751290">
        <id>Q92824</id>
    </interactant>
    <interactant intactId="EBI-748397">
        <id>P50222</id>
        <label>MEOX2</label>
    </interactant>
    <organismsDiffer>false</organismsDiffer>
    <experiments>3</experiments>
</comment>
<comment type="interaction">
    <interactant intactId="EBI-751290">
        <id>Q92824</id>
    </interactant>
    <interactant intactId="EBI-945833">
        <id>Q7Z3S9</id>
        <label>NOTCH2NLA</label>
    </interactant>
    <organismsDiffer>false</organismsDiffer>
    <experiments>3</experiments>
</comment>
<comment type="interaction">
    <interactant intactId="EBI-751290">
        <id>Q92824</id>
    </interactant>
    <interactant intactId="EBI-1210753">
        <id>Q7Z417</id>
        <label>NUFIP2</label>
    </interactant>
    <organismsDiffer>false</organismsDiffer>
    <experiments>3</experiments>
</comment>
<comment type="interaction">
    <interactant intactId="EBI-751290">
        <id>Q92824</id>
    </interactant>
    <interactant intactId="EBI-749295">
        <id>O75716</id>
        <label>STK16</label>
    </interactant>
    <organismsDiffer>false</organismsDiffer>
    <experiments>3</experiments>
</comment>
<comment type="interaction">
    <interactant intactId="EBI-11956269">
        <id>Q92824-2</id>
    </interactant>
    <interactant intactId="EBI-10173507">
        <id>Q6UY14-3</id>
        <label>ADAMTSL4</label>
    </interactant>
    <organismsDiffer>false</organismsDiffer>
    <experiments>3</experiments>
</comment>
<comment type="interaction">
    <interactant intactId="EBI-11956269">
        <id>Q92824-2</id>
    </interactant>
    <interactant intactId="EBI-12877892">
        <id>Q8WW18</id>
        <label>C17orf50</label>
    </interactant>
    <organismsDiffer>false</organismsDiffer>
    <experiments>3</experiments>
</comment>
<comment type="interaction">
    <interactant intactId="EBI-11956269">
        <id>Q92824-2</id>
    </interactant>
    <interactant intactId="EBI-7317823">
        <id>Q6P5X5</id>
        <label>C22orf39</label>
    </interactant>
    <organismsDiffer>false</organismsDiffer>
    <experiments>3</experiments>
</comment>
<comment type="interaction">
    <interactant intactId="EBI-11956269">
        <id>Q92824-2</id>
    </interactant>
    <interactant intactId="EBI-10192698">
        <id>Q02930-3</id>
        <label>CREB5</label>
    </interactant>
    <organismsDiffer>false</organismsDiffer>
    <experiments>6</experiments>
</comment>
<comment type="interaction">
    <interactant intactId="EBI-11956269">
        <id>Q92824-2</id>
    </interactant>
    <interactant intactId="EBI-3867333">
        <id>A8MQ03</id>
        <label>CYSRT1</label>
    </interactant>
    <organismsDiffer>false</organismsDiffer>
    <experiments>3</experiments>
</comment>
<comment type="interaction">
    <interactant intactId="EBI-11956269">
        <id>Q92824-2</id>
    </interactant>
    <interactant intactId="EBI-12205861">
        <id>Q8NFT6-2</id>
        <label>DBF4B</label>
    </interactant>
    <organismsDiffer>false</organismsDiffer>
    <experiments>3</experiments>
</comment>
<comment type="interaction">
    <interactant intactId="EBI-11956269">
        <id>Q92824-2</id>
    </interactant>
    <interactant intactId="EBI-448771">
        <id>Q92608</id>
        <label>DOCK2</label>
    </interactant>
    <organismsDiffer>false</organismsDiffer>
    <experiments>3</experiments>
</comment>
<comment type="interaction">
    <interactant intactId="EBI-11956269">
        <id>Q92824-2</id>
    </interactant>
    <interactant intactId="EBI-12845222">
        <id>Q9NVL1-2</id>
        <label>FAM86C1P</label>
    </interactant>
    <organismsDiffer>false</organismsDiffer>
    <experiments>3</experiments>
</comment>
<comment type="interaction">
    <interactant intactId="EBI-11956269">
        <id>Q92824-2</id>
    </interactant>
    <interactant intactId="EBI-2513774">
        <id>O95363</id>
        <label>FARS2</label>
    </interactant>
    <organismsDiffer>false</organismsDiffer>
    <experiments>3</experiments>
</comment>
<comment type="interaction">
    <interactant intactId="EBI-11956269">
        <id>Q92824-2</id>
    </interactant>
    <interactant intactId="EBI-725515">
        <id>O43559</id>
        <label>FRS3</label>
    </interactant>
    <organismsDiffer>false</organismsDiffer>
    <experiments>3</experiments>
</comment>
<comment type="interaction">
    <interactant intactId="EBI-11956269">
        <id>Q92824-2</id>
    </interactant>
    <interactant intactId="EBI-11978177">
        <id>Q96NT3-2</id>
        <label>GUCD1</label>
    </interactant>
    <organismsDiffer>false</organismsDiffer>
    <experiments>3</experiments>
</comment>
<comment type="interaction">
    <interactant intactId="EBI-11956269">
        <id>Q92824-2</id>
    </interactant>
    <interactant intactId="EBI-740785">
        <id>P49639</id>
        <label>HOXA1</label>
    </interactant>
    <organismsDiffer>false</organismsDiffer>
    <experiments>5</experiments>
</comment>
<comment type="interaction">
    <interactant intactId="EBI-11956269">
        <id>Q92824-2</id>
    </interactant>
    <interactant intactId="EBI-745290">
        <id>P17482</id>
        <label>HOXB9</label>
    </interactant>
    <organismsDiffer>false</organismsDiffer>
    <experiments>3</experiments>
</comment>
<comment type="interaction">
    <interactant intactId="EBI-11956269">
        <id>Q92824-2</id>
    </interactant>
    <interactant intactId="EBI-6509505">
        <id>Q0VD86</id>
        <label>INCA1</label>
    </interactant>
    <organismsDiffer>false</organismsDiffer>
    <experiments>3</experiments>
</comment>
<comment type="interaction">
    <interactant intactId="EBI-11956269">
        <id>Q92824-2</id>
    </interactant>
    <interactant intactId="EBI-11959885">
        <id>Q07627</id>
        <label>KRTAP1-1</label>
    </interactant>
    <organismsDiffer>false</organismsDiffer>
    <experiments>3</experiments>
</comment>
<comment type="interaction">
    <interactant intactId="EBI-11956269">
        <id>Q92824-2</id>
    </interactant>
    <interactant intactId="EBI-10171774">
        <id>P60410</id>
        <label>KRTAP10-8</label>
    </interactant>
    <organismsDiffer>false</organismsDiffer>
    <experiments>6</experiments>
</comment>
<comment type="interaction">
    <interactant intactId="EBI-11956269">
        <id>Q92824-2</id>
    </interactant>
    <interactant intactId="EBI-10172052">
        <id>P60411</id>
        <label>KRTAP10-9</label>
    </interactant>
    <organismsDiffer>false</organismsDiffer>
    <experiments>3</experiments>
</comment>
<comment type="interaction">
    <interactant intactId="EBI-11956269">
        <id>Q92824-2</id>
    </interactant>
    <interactant intactId="EBI-1052037">
        <id>Q8IUC1</id>
        <label>KRTAP11-1</label>
    </interactant>
    <organismsDiffer>false</organismsDiffer>
    <experiments>3</experiments>
</comment>
<comment type="interaction">
    <interactant intactId="EBI-11956269">
        <id>Q92824-2</id>
    </interactant>
    <interactant intactId="EBI-10176379">
        <id>P59991</id>
        <label>KRTAP12-2</label>
    </interactant>
    <organismsDiffer>false</organismsDiffer>
    <experiments>3</experiments>
</comment>
<comment type="interaction">
    <interactant intactId="EBI-11956269">
        <id>Q92824-2</id>
    </interactant>
    <interactant intactId="EBI-10241252">
        <id>Q3SY46</id>
        <label>KRTAP13-3</label>
    </interactant>
    <organismsDiffer>false</organismsDiffer>
    <experiments>3</experiments>
</comment>
<comment type="interaction">
    <interactant intactId="EBI-11956269">
        <id>Q92824-2</id>
    </interactant>
    <interactant intactId="EBI-12196745">
        <id>Q3LHN2</id>
        <label>KRTAP19-2</label>
    </interactant>
    <organismsDiffer>false</organismsDiffer>
    <experiments>3</experiments>
</comment>
<comment type="interaction">
    <interactant intactId="EBI-11956269">
        <id>Q92824-2</id>
    </interactant>
    <interactant intactId="EBI-9996449">
        <id>Q9BYR8</id>
        <label>KRTAP3-1</label>
    </interactant>
    <organismsDiffer>false</organismsDiffer>
    <experiments>3</experiments>
</comment>
<comment type="interaction">
    <interactant intactId="EBI-11956269">
        <id>Q92824-2</id>
    </interactant>
    <interactant intactId="EBI-751260">
        <id>Q9BYR7</id>
        <label>KRTAP3-2</label>
    </interactant>
    <organismsDiffer>false</organismsDiffer>
    <experiments>3</experiments>
</comment>
<comment type="interaction">
    <interactant intactId="EBI-11956269">
        <id>Q92824-2</id>
    </interactant>
    <interactant intactId="EBI-3958099">
        <id>P26371</id>
        <label>KRTAP5-9</label>
    </interactant>
    <organismsDiffer>false</organismsDiffer>
    <experiments>3</experiments>
</comment>
<comment type="interaction">
    <interactant intactId="EBI-11956269">
        <id>Q92824-2</id>
    </interactant>
    <interactant intactId="EBI-11741311">
        <id>Q5T752</id>
        <label>LCE1D</label>
    </interactant>
    <organismsDiffer>false</organismsDiffer>
    <experiments>6</experiments>
</comment>
<comment type="interaction">
    <interactant intactId="EBI-11956269">
        <id>Q92824-2</id>
    </interactant>
    <interactant intactId="EBI-11958008">
        <id>Q5T754</id>
        <label>LCE1F</label>
    </interactant>
    <organismsDiffer>false</organismsDiffer>
    <experiments>3</experiments>
</comment>
<comment type="interaction">
    <interactant intactId="EBI-11956269">
        <id>Q92824-2</id>
    </interactant>
    <interactant intactId="EBI-11973993">
        <id>Q5TA81</id>
        <label>LCE2C</label>
    </interactant>
    <organismsDiffer>false</organismsDiffer>
    <experiments>6</experiments>
</comment>
<comment type="interaction">
    <interactant intactId="EBI-11956269">
        <id>Q92824-2</id>
    </interactant>
    <interactant intactId="EBI-10245291">
        <id>Q5T5A8</id>
        <label>LCE3C</label>
    </interactant>
    <organismsDiffer>false</organismsDiffer>
    <experiments>3</experiments>
</comment>
<comment type="interaction">
    <interactant intactId="EBI-11956269">
        <id>Q92824-2</id>
    </interactant>
    <interactant intactId="EBI-6658837">
        <id>Q9BYE3</id>
        <label>LCE3D</label>
    </interactant>
    <organismsDiffer>false</organismsDiffer>
    <experiments>3</experiments>
</comment>
<comment type="interaction">
    <interactant intactId="EBI-11956269">
        <id>Q92824-2</id>
    </interactant>
    <interactant intactId="EBI-724076">
        <id>Q99750</id>
        <label>MDFI</label>
    </interactant>
    <organismsDiffer>false</organismsDiffer>
    <experiments>3</experiments>
</comment>
<comment type="interaction">
    <interactant intactId="EBI-11956269">
        <id>Q92824-2</id>
    </interactant>
    <interactant intactId="EBI-16439278">
        <id>Q6FHY5</id>
        <label>MEOX2</label>
    </interactant>
    <organismsDiffer>false</organismsDiffer>
    <experiments>3</experiments>
</comment>
<comment type="interaction">
    <interactant intactId="EBI-11956269">
        <id>Q92824-2</id>
    </interactant>
    <interactant intactId="EBI-22310682">
        <id>P0DPK4</id>
        <label>NOTCH2NLC</label>
    </interactant>
    <organismsDiffer>false</organismsDiffer>
    <experiments>3</experiments>
</comment>
<comment type="interaction">
    <interactant intactId="EBI-11956269">
        <id>Q92824-2</id>
    </interactant>
    <interactant intactId="EBI-10250949">
        <id>Q6NSM0</id>
        <label>NR1D2</label>
    </interactant>
    <organismsDiffer>false</organismsDiffer>
    <experiments>3</experiments>
</comment>
<comment type="interaction">
    <interactant intactId="EBI-11956269">
        <id>Q92824-2</id>
    </interactant>
    <interactant intactId="EBI-13644623">
        <id>Q92570</id>
        <label>NR4A3</label>
    </interactant>
    <organismsDiffer>false</organismsDiffer>
    <experiments>3</experiments>
</comment>
<comment type="interaction">
    <interactant intactId="EBI-11956269">
        <id>Q92824-2</id>
    </interactant>
    <interactant intactId="EBI-1210753">
        <id>Q7Z417</id>
        <label>NUFIP2</label>
    </interactant>
    <organismsDiffer>false</organismsDiffer>
    <experiments>3</experiments>
</comment>
<comment type="interaction">
    <interactant intactId="EBI-11956269">
        <id>Q92824-2</id>
    </interactant>
    <interactant intactId="EBI-740446">
        <id>P32242</id>
        <label>OTX1</label>
    </interactant>
    <organismsDiffer>false</organismsDiffer>
    <experiments>5</experiments>
</comment>
<comment type="interaction">
    <interactant intactId="EBI-11956269">
        <id>Q92824-2</id>
    </interactant>
    <interactant intactId="EBI-2683528">
        <id>P29122</id>
        <label>PCSK6</label>
    </interactant>
    <organismsDiffer>false</organismsDiffer>
    <experiments>3</experiments>
</comment>
<comment type="interaction">
    <interactant intactId="EBI-11956269">
        <id>Q92824-2</id>
    </interactant>
    <interactant intactId="EBI-769257">
        <id>Q9NRQ2</id>
        <label>PLSCR4</label>
    </interactant>
    <organismsDiffer>false</organismsDiffer>
    <experiments>3</experiments>
</comment>
<comment type="interaction">
    <interactant intactId="EBI-11956269">
        <id>Q92824-2</id>
    </interactant>
    <interactant intactId="EBI-17236143">
        <id>Q12837</id>
        <label>POU4F2</label>
    </interactant>
    <organismsDiffer>false</organismsDiffer>
    <experiments>6</experiments>
</comment>
<comment type="interaction">
    <interactant intactId="EBI-11956269">
        <id>Q92824-2</id>
    </interactant>
    <interactant intactId="EBI-11955083">
        <id>Q9NUL5-4</id>
        <label>SHFL</label>
    </interactant>
    <organismsDiffer>false</organismsDiffer>
    <experiments>3</experiments>
</comment>
<comment type="interaction">
    <interactant intactId="EBI-11956269">
        <id>Q92824-2</id>
    </interactant>
    <interactant intactId="EBI-750494">
        <id>P49901</id>
        <label>SMCP</label>
    </interactant>
    <organismsDiffer>false</organismsDiffer>
    <experiments>3</experiments>
</comment>
<comment type="interaction">
    <interactant intactId="EBI-11956269">
        <id>Q92824-2</id>
    </interactant>
    <interactant intactId="EBI-3866665">
        <id>O43609</id>
        <label>SPRY1</label>
    </interactant>
    <organismsDiffer>false</organismsDiffer>
    <experiments>3</experiments>
</comment>
<comment type="interaction">
    <interactant intactId="EBI-11956269">
        <id>Q92824-2</id>
    </interactant>
    <interactant intactId="EBI-750487">
        <id>Q8WW24</id>
        <label>TEKT4</label>
    </interactant>
    <organismsDiffer>false</organismsDiffer>
    <experiments>3</experiments>
</comment>
<comment type="interaction">
    <interactant intactId="EBI-11956269">
        <id>Q92824-2</id>
    </interactant>
    <interactant intactId="EBI-11741437">
        <id>Q08117-2</id>
        <label>TLE5</label>
    </interactant>
    <organismsDiffer>false</organismsDiffer>
    <experiments>3</experiments>
</comment>
<comment type="interaction">
    <interactant intactId="EBI-11956269">
        <id>Q92824-2</id>
    </interactant>
    <interactant intactId="EBI-3650647">
        <id>Q9BUZ4</id>
        <label>TRAF4</label>
    </interactant>
    <organismsDiffer>false</organismsDiffer>
    <experiments>3</experiments>
</comment>
<comment type="interaction">
    <interactant intactId="EBI-11956269">
        <id>Q92824-2</id>
    </interactant>
    <interactant intactId="EBI-492476">
        <id>Q96RU7</id>
        <label>TRIB3</label>
    </interactant>
    <organismsDiffer>false</organismsDiffer>
    <experiments>3</experiments>
</comment>
<comment type="interaction">
    <interactant intactId="EBI-11956269">
        <id>Q92824-2</id>
    </interactant>
    <interactant intactId="EBI-5235829">
        <id>Q8IWZ5</id>
        <label>TRIM42</label>
    </interactant>
    <organismsDiffer>false</organismsDiffer>
    <experiments>3</experiments>
</comment>
<comment type="interaction">
    <interactant intactId="EBI-11956269">
        <id>Q92824-2</id>
    </interactant>
    <interactant intactId="EBI-358993">
        <id>Q15645</id>
        <label>TRIP13</label>
    </interactant>
    <organismsDiffer>false</organismsDiffer>
    <experiments>3</experiments>
</comment>
<comment type="interaction">
    <interactant intactId="EBI-11956269">
        <id>Q92824-2</id>
    </interactant>
    <interactant intactId="EBI-11975223">
        <id>Q70EL1-9</id>
        <label>USP54</label>
    </interactant>
    <organismsDiffer>false</organismsDiffer>
    <experiments>3</experiments>
</comment>
<comment type="interaction">
    <interactant intactId="EBI-11956269">
        <id>Q92824-2</id>
    </interactant>
    <interactant intactId="EBI-11957216">
        <id>A8MV65-2</id>
        <label>VGLL3</label>
    </interactant>
    <organismsDiffer>false</organismsDiffer>
    <experiments>3</experiments>
</comment>
<comment type="interaction">
    <interactant intactId="EBI-11956269">
        <id>Q92824-2</id>
    </interactant>
    <interactant intactId="EBI-12895421">
        <id>Q8IVP9</id>
        <label>ZNF547</label>
    </interactant>
    <organismsDiffer>false</organismsDiffer>
    <experiments>3</experiments>
</comment>
<comment type="interaction">
    <interactant intactId="EBI-11956269">
        <id>Q92824-2</id>
    </interactant>
    <interactant intactId="EBI-625509">
        <id>Q8N720</id>
        <label>ZNF655</label>
    </interactant>
    <organismsDiffer>false</organismsDiffer>
    <experiments>3</experiments>
</comment>
<comment type="interaction">
    <interactant intactId="EBI-11956269">
        <id>Q92824-2</id>
    </interactant>
    <interactant intactId="EBI-11962574">
        <id>Q96EG3</id>
        <label>ZNF837</label>
    </interactant>
    <organismsDiffer>false</organismsDiffer>
    <experiments>3</experiments>
</comment>
<comment type="subcellular location">
    <molecule>Isoform PC6A</molecule>
    <subcellularLocation>
        <location>Secreted</location>
    </subcellularLocation>
    <text evidence="1">Secreted through the regulated secretory pathway.</text>
</comment>
<comment type="subcellular location">
    <molecule>Isoform PC6B</molecule>
    <subcellularLocation>
        <location>Endomembrane system</location>
        <topology>Single-pass type I membrane protein</topology>
    </subcellularLocation>
    <text evidence="1">Type I membrane protein localized to a paranuclear post-Golgi network compartment in communication with early endosomes.</text>
</comment>
<comment type="alternative products">
    <event type="alternative splicing"/>
    <isoform>
        <id>Q92824-1</id>
        <name>PC6B</name>
        <name>Long</name>
        <sequence type="displayed"/>
    </isoform>
    <isoform>
        <id>Q92824-2</id>
        <name>PC6A</name>
        <name>Short</name>
        <sequence type="described" ref="VSP_042017 VSP_042018"/>
    </isoform>
</comment>
<comment type="tissue specificity">
    <text>Expressed in T-lymphocytes.</text>
</comment>
<comment type="domain">
    <text>The propeptide domain acts as an intramolecular chaperone assisting the folding of the zymogen within the endoplasmic reticulum.</text>
</comment>
<comment type="domain">
    <text evidence="1">AC 1 and AC 2 (clusters of acidic amino acids) contain sorting information. AC 1 directs TGN localization and interacts with the TGN sorting protein PACS-1 (By similarity).</text>
</comment>
<comment type="similarity">
    <text evidence="12">Belongs to the peptidase S8 family.</text>
</comment>
<organism>
    <name type="scientific">Homo sapiens</name>
    <name type="common">Human</name>
    <dbReference type="NCBI Taxonomy" id="9606"/>
    <lineage>
        <taxon>Eukaryota</taxon>
        <taxon>Metazoa</taxon>
        <taxon>Chordata</taxon>
        <taxon>Craniata</taxon>
        <taxon>Vertebrata</taxon>
        <taxon>Euteleostomi</taxon>
        <taxon>Mammalia</taxon>
        <taxon>Eutheria</taxon>
        <taxon>Euarchontoglires</taxon>
        <taxon>Primates</taxon>
        <taxon>Haplorrhini</taxon>
        <taxon>Catarrhini</taxon>
        <taxon>Hominidae</taxon>
        <taxon>Homo</taxon>
    </lineage>
</organism>